<sequence length="300" mass="32438">MKIGHQFHTVALVGRSNTPGIAEPLASLAACIAKRGFEVVFEADTAQAIGSAGYPALTPAEIGARADVAVVLGGDGTMLGMGRQLAPYKTPLIGINHGRLGFITDIPASDMREVVPMMLAGSYEREERTLLEARIVRNGEPIYHALAFNDVVVNRSGFSGMAELRVSVDGRFMYNQRSDGLIVATPTGSTAYALSSQGPILHPQLQGIVLVPIAPHALSNRPIVLPDDSKIAIQIIGGRDVNVNFDMQSFTALELNDTIEVRRSKHTVPFLHPVGYSYYATLRKKLHWNEHPSSEEDDDA</sequence>
<protein>
    <recommendedName>
        <fullName evidence="1">NAD kinase</fullName>
        <ecNumber evidence="1">2.7.1.23</ecNumber>
    </recommendedName>
    <alternativeName>
        <fullName evidence="1">ATP-dependent NAD kinase</fullName>
    </alternativeName>
</protein>
<proteinExistence type="inferred from homology"/>
<gene>
    <name evidence="1" type="primary">nadK</name>
    <name type="ordered locus">BPSL2833</name>
</gene>
<reference key="1">
    <citation type="journal article" date="2004" name="Proc. Natl. Acad. Sci. U.S.A.">
        <title>Genomic plasticity of the causative agent of melioidosis, Burkholderia pseudomallei.</title>
        <authorList>
            <person name="Holden M.T.G."/>
            <person name="Titball R.W."/>
            <person name="Peacock S.J."/>
            <person name="Cerdeno-Tarraga A.-M."/>
            <person name="Atkins T."/>
            <person name="Crossman L.C."/>
            <person name="Pitt T."/>
            <person name="Churcher C."/>
            <person name="Mungall K.L."/>
            <person name="Bentley S.D."/>
            <person name="Sebaihia M."/>
            <person name="Thomson N.R."/>
            <person name="Bason N."/>
            <person name="Beacham I.R."/>
            <person name="Brooks K."/>
            <person name="Brown K.A."/>
            <person name="Brown N.F."/>
            <person name="Challis G.L."/>
            <person name="Cherevach I."/>
            <person name="Chillingworth T."/>
            <person name="Cronin A."/>
            <person name="Crossett B."/>
            <person name="Davis P."/>
            <person name="DeShazer D."/>
            <person name="Feltwell T."/>
            <person name="Fraser A."/>
            <person name="Hance Z."/>
            <person name="Hauser H."/>
            <person name="Holroyd S."/>
            <person name="Jagels K."/>
            <person name="Keith K.E."/>
            <person name="Maddison M."/>
            <person name="Moule S."/>
            <person name="Price C."/>
            <person name="Quail M.A."/>
            <person name="Rabbinowitsch E."/>
            <person name="Rutherford K."/>
            <person name="Sanders M."/>
            <person name="Simmonds M."/>
            <person name="Songsivilai S."/>
            <person name="Stevens K."/>
            <person name="Tumapa S."/>
            <person name="Vesaratchavest M."/>
            <person name="Whitehead S."/>
            <person name="Yeats C."/>
            <person name="Barrell B.G."/>
            <person name="Oyston P.C.F."/>
            <person name="Parkhill J."/>
        </authorList>
    </citation>
    <scope>NUCLEOTIDE SEQUENCE [LARGE SCALE GENOMIC DNA]</scope>
    <source>
        <strain>K96243</strain>
    </source>
</reference>
<accession>Q63R41</accession>
<dbReference type="EC" id="2.7.1.23" evidence="1"/>
<dbReference type="EMBL" id="BX571965">
    <property type="protein sequence ID" value="CAH36843.1"/>
    <property type="molecule type" value="Genomic_DNA"/>
</dbReference>
<dbReference type="RefSeq" id="WP_004533590.1">
    <property type="nucleotide sequence ID" value="NZ_CP009538.1"/>
</dbReference>
<dbReference type="RefSeq" id="YP_109427.1">
    <property type="nucleotide sequence ID" value="NC_006350.1"/>
</dbReference>
<dbReference type="SMR" id="Q63R41"/>
<dbReference type="STRING" id="272560.BPSL2833"/>
<dbReference type="KEGG" id="bps:BPSL2833"/>
<dbReference type="PATRIC" id="fig|272560.51.peg.2469"/>
<dbReference type="eggNOG" id="COG0061">
    <property type="taxonomic scope" value="Bacteria"/>
</dbReference>
<dbReference type="Proteomes" id="UP000000605">
    <property type="component" value="Chromosome 1"/>
</dbReference>
<dbReference type="GO" id="GO:0005737">
    <property type="term" value="C:cytoplasm"/>
    <property type="evidence" value="ECO:0007669"/>
    <property type="project" value="UniProtKB-SubCell"/>
</dbReference>
<dbReference type="GO" id="GO:0005524">
    <property type="term" value="F:ATP binding"/>
    <property type="evidence" value="ECO:0007669"/>
    <property type="project" value="UniProtKB-KW"/>
</dbReference>
<dbReference type="GO" id="GO:0046872">
    <property type="term" value="F:metal ion binding"/>
    <property type="evidence" value="ECO:0007669"/>
    <property type="project" value="UniProtKB-UniRule"/>
</dbReference>
<dbReference type="GO" id="GO:0051287">
    <property type="term" value="F:NAD binding"/>
    <property type="evidence" value="ECO:0007669"/>
    <property type="project" value="UniProtKB-ARBA"/>
</dbReference>
<dbReference type="GO" id="GO:0003951">
    <property type="term" value="F:NAD+ kinase activity"/>
    <property type="evidence" value="ECO:0007669"/>
    <property type="project" value="UniProtKB-UniRule"/>
</dbReference>
<dbReference type="GO" id="GO:0019674">
    <property type="term" value="P:NAD metabolic process"/>
    <property type="evidence" value="ECO:0007669"/>
    <property type="project" value="InterPro"/>
</dbReference>
<dbReference type="GO" id="GO:0006741">
    <property type="term" value="P:NADP biosynthetic process"/>
    <property type="evidence" value="ECO:0007669"/>
    <property type="project" value="UniProtKB-UniRule"/>
</dbReference>
<dbReference type="Gene3D" id="3.40.50.10330">
    <property type="entry name" value="Probable inorganic polyphosphate/atp-NAD kinase, domain 1"/>
    <property type="match status" value="1"/>
</dbReference>
<dbReference type="Gene3D" id="2.60.200.30">
    <property type="entry name" value="Probable inorganic polyphosphate/atp-NAD kinase, domain 2"/>
    <property type="match status" value="1"/>
</dbReference>
<dbReference type="HAMAP" id="MF_00361">
    <property type="entry name" value="NAD_kinase"/>
    <property type="match status" value="1"/>
</dbReference>
<dbReference type="InterPro" id="IPR017438">
    <property type="entry name" value="ATP-NAD_kinase_N"/>
</dbReference>
<dbReference type="InterPro" id="IPR017437">
    <property type="entry name" value="ATP-NAD_kinase_PpnK-typ_C"/>
</dbReference>
<dbReference type="InterPro" id="IPR016064">
    <property type="entry name" value="NAD/diacylglycerol_kinase_sf"/>
</dbReference>
<dbReference type="InterPro" id="IPR002504">
    <property type="entry name" value="NADK"/>
</dbReference>
<dbReference type="NCBIfam" id="NF002561">
    <property type="entry name" value="PRK02155.1"/>
    <property type="match status" value="1"/>
</dbReference>
<dbReference type="PANTHER" id="PTHR20275">
    <property type="entry name" value="NAD KINASE"/>
    <property type="match status" value="1"/>
</dbReference>
<dbReference type="PANTHER" id="PTHR20275:SF0">
    <property type="entry name" value="NAD KINASE"/>
    <property type="match status" value="1"/>
</dbReference>
<dbReference type="Pfam" id="PF01513">
    <property type="entry name" value="NAD_kinase"/>
    <property type="match status" value="1"/>
</dbReference>
<dbReference type="Pfam" id="PF20143">
    <property type="entry name" value="NAD_kinase_C"/>
    <property type="match status" value="1"/>
</dbReference>
<dbReference type="SUPFAM" id="SSF111331">
    <property type="entry name" value="NAD kinase/diacylglycerol kinase-like"/>
    <property type="match status" value="1"/>
</dbReference>
<organism>
    <name type="scientific">Burkholderia pseudomallei (strain K96243)</name>
    <dbReference type="NCBI Taxonomy" id="272560"/>
    <lineage>
        <taxon>Bacteria</taxon>
        <taxon>Pseudomonadati</taxon>
        <taxon>Pseudomonadota</taxon>
        <taxon>Betaproteobacteria</taxon>
        <taxon>Burkholderiales</taxon>
        <taxon>Burkholderiaceae</taxon>
        <taxon>Burkholderia</taxon>
        <taxon>pseudomallei group</taxon>
    </lineage>
</organism>
<comment type="function">
    <text evidence="1">Involved in the regulation of the intracellular balance of NAD and NADP, and is a key enzyme in the biosynthesis of NADP. Catalyzes specifically the phosphorylation on 2'-hydroxyl of the adenosine moiety of NAD to yield NADP.</text>
</comment>
<comment type="catalytic activity">
    <reaction evidence="1">
        <text>NAD(+) + ATP = ADP + NADP(+) + H(+)</text>
        <dbReference type="Rhea" id="RHEA:18629"/>
        <dbReference type="ChEBI" id="CHEBI:15378"/>
        <dbReference type="ChEBI" id="CHEBI:30616"/>
        <dbReference type="ChEBI" id="CHEBI:57540"/>
        <dbReference type="ChEBI" id="CHEBI:58349"/>
        <dbReference type="ChEBI" id="CHEBI:456216"/>
        <dbReference type="EC" id="2.7.1.23"/>
    </reaction>
</comment>
<comment type="cofactor">
    <cofactor evidence="1">
        <name>a divalent metal cation</name>
        <dbReference type="ChEBI" id="CHEBI:60240"/>
    </cofactor>
</comment>
<comment type="subcellular location">
    <subcellularLocation>
        <location evidence="1">Cytoplasm</location>
    </subcellularLocation>
</comment>
<comment type="similarity">
    <text evidence="1">Belongs to the NAD kinase family.</text>
</comment>
<name>NADK_BURPS</name>
<feature type="chain" id="PRO_0000229618" description="NAD kinase">
    <location>
        <begin position="1"/>
        <end position="300"/>
    </location>
</feature>
<feature type="active site" description="Proton acceptor" evidence="1">
    <location>
        <position position="75"/>
    </location>
</feature>
<feature type="binding site" evidence="1">
    <location>
        <begin position="75"/>
        <end position="76"/>
    </location>
    <ligand>
        <name>NAD(+)</name>
        <dbReference type="ChEBI" id="CHEBI:57540"/>
    </ligand>
</feature>
<feature type="binding site" evidence="1">
    <location>
        <begin position="149"/>
        <end position="150"/>
    </location>
    <ligand>
        <name>NAD(+)</name>
        <dbReference type="ChEBI" id="CHEBI:57540"/>
    </ligand>
</feature>
<feature type="binding site" evidence="1">
    <location>
        <position position="177"/>
    </location>
    <ligand>
        <name>NAD(+)</name>
        <dbReference type="ChEBI" id="CHEBI:57540"/>
    </ligand>
</feature>
<feature type="binding site" evidence="1">
    <location>
        <position position="179"/>
    </location>
    <ligand>
        <name>NAD(+)</name>
        <dbReference type="ChEBI" id="CHEBI:57540"/>
    </ligand>
</feature>
<feature type="binding site" evidence="1">
    <location>
        <begin position="190"/>
        <end position="195"/>
    </location>
    <ligand>
        <name>NAD(+)</name>
        <dbReference type="ChEBI" id="CHEBI:57540"/>
    </ligand>
</feature>
<feature type="binding site" evidence="1">
    <location>
        <position position="214"/>
    </location>
    <ligand>
        <name>NAD(+)</name>
        <dbReference type="ChEBI" id="CHEBI:57540"/>
    </ligand>
</feature>
<feature type="binding site" evidence="1">
    <location>
        <position position="248"/>
    </location>
    <ligand>
        <name>NAD(+)</name>
        <dbReference type="ChEBI" id="CHEBI:57540"/>
    </ligand>
</feature>
<evidence type="ECO:0000255" key="1">
    <source>
        <dbReference type="HAMAP-Rule" id="MF_00361"/>
    </source>
</evidence>
<keyword id="KW-0067">ATP-binding</keyword>
<keyword id="KW-0963">Cytoplasm</keyword>
<keyword id="KW-0418">Kinase</keyword>
<keyword id="KW-0520">NAD</keyword>
<keyword id="KW-0521">NADP</keyword>
<keyword id="KW-0547">Nucleotide-binding</keyword>
<keyword id="KW-1185">Reference proteome</keyword>
<keyword id="KW-0808">Transferase</keyword>